<comment type="function">
    <text evidence="3">Required for respiration. Stabilizes the mitochondrial bicistronic mRNA encoding ATP6 and ATP8, 2 subunits of the proton-translocating ATP synthase.</text>
</comment>
<comment type="subcellular location">
    <subcellularLocation>
        <location evidence="1 3">Mitochondrion inner membrane</location>
        <topology evidence="1 3">Peripheral membrane protein</topology>
        <orientation evidence="1 3">Matrix side</orientation>
    </subcellularLocation>
</comment>
<comment type="miscellaneous">
    <text evidence="2">Present with 1760 molecules/cell in log phase SD medium.</text>
</comment>
<protein>
    <recommendedName>
        <fullName>ATPase expression protein 3</fullName>
    </recommendedName>
</protein>
<evidence type="ECO:0000269" key="1">
    <source>
    </source>
</evidence>
<evidence type="ECO:0000269" key="2">
    <source>
    </source>
</evidence>
<evidence type="ECO:0000269" key="3">
    <source>
    </source>
</evidence>
<proteinExistence type="evidence at protein level"/>
<reference key="1">
    <citation type="journal article" date="1997" name="Nature">
        <title>The nucleotide sequence of Saccharomyces cerevisiae chromosome XVI.</title>
        <authorList>
            <person name="Bussey H."/>
            <person name="Storms R.K."/>
            <person name="Ahmed A."/>
            <person name="Albermann K."/>
            <person name="Allen E."/>
            <person name="Ansorge W."/>
            <person name="Araujo R."/>
            <person name="Aparicio A."/>
            <person name="Barrell B.G."/>
            <person name="Badcock K."/>
            <person name="Benes V."/>
            <person name="Botstein D."/>
            <person name="Bowman S."/>
            <person name="Brueckner M."/>
            <person name="Carpenter J."/>
            <person name="Cherry J.M."/>
            <person name="Chung E."/>
            <person name="Churcher C.M."/>
            <person name="Coster F."/>
            <person name="Davis K."/>
            <person name="Davis R.W."/>
            <person name="Dietrich F.S."/>
            <person name="Delius H."/>
            <person name="DiPaolo T."/>
            <person name="Dubois E."/>
            <person name="Duesterhoeft A."/>
            <person name="Duncan M."/>
            <person name="Floeth M."/>
            <person name="Fortin N."/>
            <person name="Friesen J.D."/>
            <person name="Fritz C."/>
            <person name="Goffeau A."/>
            <person name="Hall J."/>
            <person name="Hebling U."/>
            <person name="Heumann K."/>
            <person name="Hilbert H."/>
            <person name="Hillier L.W."/>
            <person name="Hunicke-Smith S."/>
            <person name="Hyman R.W."/>
            <person name="Johnston M."/>
            <person name="Kalman S."/>
            <person name="Kleine K."/>
            <person name="Komp C."/>
            <person name="Kurdi O."/>
            <person name="Lashkari D."/>
            <person name="Lew H."/>
            <person name="Lin A."/>
            <person name="Lin D."/>
            <person name="Louis E.J."/>
            <person name="Marathe R."/>
            <person name="Messenguy F."/>
            <person name="Mewes H.-W."/>
            <person name="Mirtipati S."/>
            <person name="Moestl D."/>
            <person name="Mueller-Auer S."/>
            <person name="Namath A."/>
            <person name="Nentwich U."/>
            <person name="Oefner P."/>
            <person name="Pearson D."/>
            <person name="Petel F.X."/>
            <person name="Pohl T.M."/>
            <person name="Purnelle B."/>
            <person name="Rajandream M.A."/>
            <person name="Rechmann S."/>
            <person name="Rieger M."/>
            <person name="Riles L."/>
            <person name="Roberts D."/>
            <person name="Schaefer M."/>
            <person name="Scharfe M."/>
            <person name="Scherens B."/>
            <person name="Schramm S."/>
            <person name="Schroeder M."/>
            <person name="Sdicu A.-M."/>
            <person name="Tettelin H."/>
            <person name="Urrestarazu L.A."/>
            <person name="Ushinsky S."/>
            <person name="Vierendeels F."/>
            <person name="Vissers S."/>
            <person name="Voss H."/>
            <person name="Walsh S.V."/>
            <person name="Wambutt R."/>
            <person name="Wang Y."/>
            <person name="Wedler E."/>
            <person name="Wedler H."/>
            <person name="Winnett E."/>
            <person name="Zhong W.-W."/>
            <person name="Zollner A."/>
            <person name="Vo D.H."/>
            <person name="Hani J."/>
        </authorList>
    </citation>
    <scope>NUCLEOTIDE SEQUENCE [LARGE SCALE GENOMIC DNA]</scope>
    <source>
        <strain>ATCC 204508 / S288c</strain>
    </source>
</reference>
<reference key="2">
    <citation type="journal article" date="2014" name="G3 (Bethesda)">
        <title>The reference genome sequence of Saccharomyces cerevisiae: Then and now.</title>
        <authorList>
            <person name="Engel S.R."/>
            <person name="Dietrich F.S."/>
            <person name="Fisk D.G."/>
            <person name="Binkley G."/>
            <person name="Balakrishnan R."/>
            <person name="Costanzo M.C."/>
            <person name="Dwight S.S."/>
            <person name="Hitz B.C."/>
            <person name="Karra K."/>
            <person name="Nash R.S."/>
            <person name="Weng S."/>
            <person name="Wong E.D."/>
            <person name="Lloyd P."/>
            <person name="Skrzypek M.S."/>
            <person name="Miyasato S.R."/>
            <person name="Simison M."/>
            <person name="Cherry J.M."/>
        </authorList>
    </citation>
    <scope>GENOME REANNOTATION</scope>
    <source>
        <strain>ATCC 204508 / S288c</strain>
    </source>
</reference>
<reference key="3">
    <citation type="journal article" date="2007" name="Genome Res.">
        <title>Approaching a complete repository of sequence-verified protein-encoding clones for Saccharomyces cerevisiae.</title>
        <authorList>
            <person name="Hu Y."/>
            <person name="Rolfs A."/>
            <person name="Bhullar B."/>
            <person name="Murthy T.V.S."/>
            <person name="Zhu C."/>
            <person name="Berger M.F."/>
            <person name="Camargo A.A."/>
            <person name="Kelley F."/>
            <person name="McCarron S."/>
            <person name="Jepson D."/>
            <person name="Richardson A."/>
            <person name="Raphael J."/>
            <person name="Moreira D."/>
            <person name="Taycher E."/>
            <person name="Zuo D."/>
            <person name="Mohr S."/>
            <person name="Kane M.F."/>
            <person name="Williamson J."/>
            <person name="Simpson A.J.G."/>
            <person name="Bulyk M.L."/>
            <person name="Harlow E."/>
            <person name="Marsischky G."/>
            <person name="Kolodner R.D."/>
            <person name="LaBaer J."/>
        </authorList>
    </citation>
    <scope>NUCLEOTIDE SEQUENCE [GENOMIC DNA]</scope>
    <source>
        <strain>ATCC 204508 / S288c</strain>
    </source>
</reference>
<reference key="4">
    <citation type="journal article" date="2003" name="Nature">
        <title>Global analysis of protein localization in budding yeast.</title>
        <authorList>
            <person name="Huh W.-K."/>
            <person name="Falvo J.V."/>
            <person name="Gerke L.C."/>
            <person name="Carroll A.S."/>
            <person name="Howson R.W."/>
            <person name="Weissman J.S."/>
            <person name="O'Shea E.K."/>
        </authorList>
    </citation>
    <scope>SUBCELLULAR LOCATION [LARGE SCALE ANALYSIS]</scope>
</reference>
<reference key="5">
    <citation type="journal article" date="2003" name="Nature">
        <title>Global analysis of protein expression in yeast.</title>
        <authorList>
            <person name="Ghaemmaghami S."/>
            <person name="Huh W.-K."/>
            <person name="Bower K."/>
            <person name="Howson R.W."/>
            <person name="Belle A."/>
            <person name="Dephoure N."/>
            <person name="O'Shea E.K."/>
            <person name="Weissman J.S."/>
        </authorList>
    </citation>
    <scope>LEVEL OF PROTEIN EXPRESSION [LARGE SCALE ANALYSIS]</scope>
</reference>
<reference key="6">
    <citation type="journal article" date="2004" name="J. Biol. Chem.">
        <title>Aep3p stabilizes the mitochondrial bicistronic mRNA encoding subunits 6 and 8 of the H+-translocating ATP synthase of Saccharomyces cerevisiae.</title>
        <authorList>
            <person name="Ellis T.P."/>
            <person name="Helfenbein K.G."/>
            <person name="Tzagoloff A."/>
            <person name="Dieckmann C.L."/>
        </authorList>
    </citation>
    <scope>FUNCTION</scope>
    <scope>SUBCELLULAR LOCATION</scope>
</reference>
<feature type="chain" id="PRO_0000064466" description="ATPase expression protein 3">
    <location>
        <begin position="1"/>
        <end position="606"/>
    </location>
</feature>
<feature type="repeat" description="PPR 1">
    <location>
        <begin position="220"/>
        <end position="254"/>
    </location>
</feature>
<feature type="repeat" description="PPR 2">
    <location>
        <begin position="397"/>
        <end position="432"/>
    </location>
</feature>
<feature type="repeat" description="PPR 3">
    <location>
        <begin position="433"/>
        <end position="467"/>
    </location>
</feature>
<organism>
    <name type="scientific">Saccharomyces cerevisiae (strain ATCC 204508 / S288c)</name>
    <name type="common">Baker's yeast</name>
    <dbReference type="NCBI Taxonomy" id="559292"/>
    <lineage>
        <taxon>Eukaryota</taxon>
        <taxon>Fungi</taxon>
        <taxon>Dikarya</taxon>
        <taxon>Ascomycota</taxon>
        <taxon>Saccharomycotina</taxon>
        <taxon>Saccharomycetes</taxon>
        <taxon>Saccharomycetales</taxon>
        <taxon>Saccharomycetaceae</taxon>
        <taxon>Saccharomyces</taxon>
    </lineage>
</organism>
<gene>
    <name type="primary">AEP3</name>
    <name type="ordered locus">YPL005W</name>
    <name type="ORF">YP8132.08</name>
</gene>
<sequence>MNTLRCLTQALSKSGREAPKLYQKVIFPGLFREGIPIANVKKVDEKIIDSPTSTSVNGEAKKIVRHGVKYEREQVKEYLSSLPTLTLSRKQIRDDYDEERAKRMYMFSKQTNSSNKFQKLLTAKSQEFTRELLTLLIDCTSNEKNSGPERFTRKFLKFSNDEIPPLPDFSKNPQLFENYIGILSHTKFNFRSSSKLNGIVRKMLRHLLHPTNKTTLPLRSAQVYNDSIYFFSEHFDFASCREIFAQMKAEGTKPNTITFNLLLRNVVKNSHIRKTKHPDDEVLFYLRSMRNHGVFADVITWTTCYNFLRDEVSRQLYIVQMGEHLGNFNVNFVYTVLRNGDYRAEDCLKVLAANSLPISRKTFYLCIERLLNEEQLETASKLLDYGFQHLKSNFKLDSEAMNHFMRVFANKGRSDLAFLCYNTCRKIYKIKPDSQTFEMLFKALVRNGNTKNFGAVLQYIKDLKVSEGFGLRTSYWRTKADSIFKFGSPNTLSEKSIEKARKLLGNLIASEGEFSWKIWKESDSSQKKILRFLGCIPTTLRCTNTAQDHQKPTNLPSNISQKKREYRNRVKAIATKAALEKRMAYIKDNDVAFKKELVKRRIVGEV</sequence>
<accession>Q12089</accession>
<accession>D6W407</accession>
<dbReference type="EMBL" id="Z48483">
    <property type="protein sequence ID" value="CAA88381.1"/>
    <property type="molecule type" value="Genomic_DNA"/>
</dbReference>
<dbReference type="EMBL" id="Z71255">
    <property type="protein sequence ID" value="CAA95036.1"/>
    <property type="molecule type" value="Genomic_DNA"/>
</dbReference>
<dbReference type="EMBL" id="U33335">
    <property type="protein sequence ID" value="AAB68100.1"/>
    <property type="molecule type" value="Genomic_DNA"/>
</dbReference>
<dbReference type="EMBL" id="AY692659">
    <property type="protein sequence ID" value="AAT92678.1"/>
    <property type="molecule type" value="Genomic_DNA"/>
</dbReference>
<dbReference type="EMBL" id="BK006949">
    <property type="protein sequence ID" value="DAA11423.1"/>
    <property type="molecule type" value="Genomic_DNA"/>
</dbReference>
<dbReference type="PIR" id="S52526">
    <property type="entry name" value="S52526"/>
</dbReference>
<dbReference type="RefSeq" id="NP_015320.1">
    <property type="nucleotide sequence ID" value="NM_001183819.1"/>
</dbReference>
<dbReference type="SMR" id="Q12089"/>
<dbReference type="BioGRID" id="36172">
    <property type="interactions" value="81"/>
</dbReference>
<dbReference type="DIP" id="DIP-4045N"/>
<dbReference type="FunCoup" id="Q12089">
    <property type="interactions" value="51"/>
</dbReference>
<dbReference type="IntAct" id="Q12089">
    <property type="interactions" value="1"/>
</dbReference>
<dbReference type="MINT" id="Q12089"/>
<dbReference type="STRING" id="4932.YPL005W"/>
<dbReference type="PaxDb" id="4932-YPL005W"/>
<dbReference type="PeptideAtlas" id="Q12089"/>
<dbReference type="EnsemblFungi" id="YPL005W_mRNA">
    <property type="protein sequence ID" value="YPL005W"/>
    <property type="gene ID" value="YPL005W"/>
</dbReference>
<dbReference type="GeneID" id="856102"/>
<dbReference type="KEGG" id="sce:YPL005W"/>
<dbReference type="AGR" id="SGD:S000005926"/>
<dbReference type="SGD" id="S000005926">
    <property type="gene designation" value="AEP3"/>
</dbReference>
<dbReference type="VEuPathDB" id="FungiDB:YPL005W"/>
<dbReference type="eggNOG" id="ENOG502QVB0">
    <property type="taxonomic scope" value="Eukaryota"/>
</dbReference>
<dbReference type="HOGENOM" id="CLU_457135_0_0_1"/>
<dbReference type="InParanoid" id="Q12089"/>
<dbReference type="OMA" id="TWTTCYN"/>
<dbReference type="OrthoDB" id="185373at2759"/>
<dbReference type="BioCyc" id="YEAST:G3O-33924-MONOMER"/>
<dbReference type="BioGRID-ORCS" id="856102">
    <property type="hits" value="0 hits in 10 CRISPR screens"/>
</dbReference>
<dbReference type="PRO" id="PR:Q12089"/>
<dbReference type="Proteomes" id="UP000002311">
    <property type="component" value="Chromosome XVI"/>
</dbReference>
<dbReference type="RNAct" id="Q12089">
    <property type="molecule type" value="protein"/>
</dbReference>
<dbReference type="GO" id="GO:0005737">
    <property type="term" value="C:cytoplasm"/>
    <property type="evidence" value="ECO:0007005"/>
    <property type="project" value="SGD"/>
</dbReference>
<dbReference type="GO" id="GO:0005743">
    <property type="term" value="C:mitochondrial inner membrane"/>
    <property type="evidence" value="ECO:0007669"/>
    <property type="project" value="UniProtKB-SubCell"/>
</dbReference>
<dbReference type="GO" id="GO:0005739">
    <property type="term" value="C:mitochondrion"/>
    <property type="evidence" value="ECO:0007005"/>
    <property type="project" value="SGD"/>
</dbReference>
<dbReference type="GO" id="GO:0003729">
    <property type="term" value="F:mRNA binding"/>
    <property type="evidence" value="ECO:0000318"/>
    <property type="project" value="GO_Central"/>
</dbReference>
<dbReference type="GO" id="GO:0070124">
    <property type="term" value="P:mitochondrial translational initiation"/>
    <property type="evidence" value="ECO:0000316"/>
    <property type="project" value="SGD"/>
</dbReference>
<dbReference type="GO" id="GO:0016071">
    <property type="term" value="P:mRNA metabolic process"/>
    <property type="evidence" value="ECO:0000315"/>
    <property type="project" value="SGD"/>
</dbReference>
<dbReference type="GO" id="GO:0006397">
    <property type="term" value="P:mRNA processing"/>
    <property type="evidence" value="ECO:0000318"/>
    <property type="project" value="GO_Central"/>
</dbReference>
<dbReference type="FunFam" id="1.25.40.10:FF:001906">
    <property type="entry name" value="ATPase expression protein"/>
    <property type="match status" value="1"/>
</dbReference>
<dbReference type="Gene3D" id="1.25.40.10">
    <property type="entry name" value="Tetratricopeptide repeat domain"/>
    <property type="match status" value="2"/>
</dbReference>
<dbReference type="InterPro" id="IPR002885">
    <property type="entry name" value="Pentatricopeptide_rpt"/>
</dbReference>
<dbReference type="InterPro" id="IPR050667">
    <property type="entry name" value="PPR-containing_protein"/>
</dbReference>
<dbReference type="InterPro" id="IPR011990">
    <property type="entry name" value="TPR-like_helical_dom_sf"/>
</dbReference>
<dbReference type="PANTHER" id="PTHR47939">
    <property type="entry name" value="MEMBRANE-ASSOCIATED SALT-INDUCIBLE PROTEIN-LIKE"/>
    <property type="match status" value="1"/>
</dbReference>
<dbReference type="PANTHER" id="PTHR47939:SF13">
    <property type="entry name" value="OS03G0201400 PROTEIN"/>
    <property type="match status" value="1"/>
</dbReference>
<dbReference type="Pfam" id="PF13812">
    <property type="entry name" value="PPR_3"/>
    <property type="match status" value="1"/>
</dbReference>
<name>AEP3_YEAST</name>
<keyword id="KW-0472">Membrane</keyword>
<keyword id="KW-0496">Mitochondrion</keyword>
<keyword id="KW-0999">Mitochondrion inner membrane</keyword>
<keyword id="KW-1185">Reference proteome</keyword>
<keyword id="KW-0677">Repeat</keyword>